<gene>
    <name evidence="2" type="primary">UTP11</name>
    <name type="ORF">PF3D7_1247900</name>
    <name type="ORF">PFL2295w</name>
</gene>
<comment type="function">
    <text evidence="1">Involved in nucleolar processing of pre-18S ribosomal RNA.</text>
</comment>
<comment type="subunit">
    <text evidence="1">Component of the ribosomal small subunit (SSU) processome.</text>
</comment>
<comment type="subcellular location">
    <subcellularLocation>
        <location evidence="1">Nucleus</location>
        <location evidence="1">Nucleolus</location>
    </subcellularLocation>
</comment>
<comment type="similarity">
    <text evidence="2">Belongs to the UTP11 family.</text>
</comment>
<name>UTP11_PLAF7</name>
<feature type="chain" id="PRO_0000211048" description="Probable U3 small nucleolar RNA-associated protein 11">
    <location>
        <begin position="1"/>
        <end position="212"/>
    </location>
</feature>
<keyword id="KW-0539">Nucleus</keyword>
<keyword id="KW-1185">Reference proteome</keyword>
<keyword id="KW-0698">rRNA processing</keyword>
<organism>
    <name type="scientific">Plasmodium falciparum (isolate 3D7)</name>
    <dbReference type="NCBI Taxonomy" id="36329"/>
    <lineage>
        <taxon>Eukaryota</taxon>
        <taxon>Sar</taxon>
        <taxon>Alveolata</taxon>
        <taxon>Apicomplexa</taxon>
        <taxon>Aconoidasida</taxon>
        <taxon>Haemosporida</taxon>
        <taxon>Plasmodiidae</taxon>
        <taxon>Plasmodium</taxon>
        <taxon>Plasmodium (Laverania)</taxon>
    </lineage>
</organism>
<sequence>MSNFKNIIPKRTYLERGQAKHRLHLGELEKKVDYGKRREIYKKKKKIENVLKEKIMTKNPDEFHTGMVHSRVTEDNVLVREEKVLKKEVQLKNKRQELKEQTNDLYNKLKKINKRLSNYQMNIPLRYVFNNSHELYNENEIYTLKAENKKLKKRGDLIQKKYNGLINMKKNLLDQIRKLDNKYITTYHKVDGYNIVTDKGKTPYRLYQPRLK</sequence>
<accession>Q8I4V5</accession>
<accession>A0A144A0U0</accession>
<dbReference type="EMBL" id="LN999947">
    <property type="protein sequence ID" value="CZT99634.1"/>
    <property type="molecule type" value="Genomic_DNA"/>
</dbReference>
<dbReference type="RefSeq" id="XP_001350863.1">
    <property type="nucleotide sequence ID" value="XM_001350827.1"/>
</dbReference>
<dbReference type="SMR" id="Q8I4V5"/>
<dbReference type="STRING" id="36329.Q8I4V5"/>
<dbReference type="PaxDb" id="5833-PFL2295w"/>
<dbReference type="EnsemblProtists" id="CZT99634">
    <property type="protein sequence ID" value="CZT99634"/>
    <property type="gene ID" value="PF3D7_1247900"/>
</dbReference>
<dbReference type="GeneID" id="811511"/>
<dbReference type="KEGG" id="pfa:PF3D7_1247900"/>
<dbReference type="VEuPathDB" id="PlasmoDB:PF3D7_1247900"/>
<dbReference type="HOGENOM" id="CLU_1263768_0_0_1"/>
<dbReference type="InParanoid" id="Q8I4V5"/>
<dbReference type="OMA" id="GMVHSRI"/>
<dbReference type="OrthoDB" id="29058at2759"/>
<dbReference type="PhylomeDB" id="Q8I4V5"/>
<dbReference type="Reactome" id="R-PFA-6791226">
    <property type="pathway name" value="Major pathway of rRNA processing in the nucleolus and cytosol"/>
</dbReference>
<dbReference type="Proteomes" id="UP000001450">
    <property type="component" value="Chromosome 12"/>
</dbReference>
<dbReference type="GO" id="GO:0005730">
    <property type="term" value="C:nucleolus"/>
    <property type="evidence" value="ECO:0000318"/>
    <property type="project" value="GO_Central"/>
</dbReference>
<dbReference type="GO" id="GO:0032040">
    <property type="term" value="C:small-subunit processome"/>
    <property type="evidence" value="ECO:0000318"/>
    <property type="project" value="GO_Central"/>
</dbReference>
<dbReference type="GO" id="GO:0006364">
    <property type="term" value="P:rRNA processing"/>
    <property type="evidence" value="ECO:0007669"/>
    <property type="project" value="UniProtKB-KW"/>
</dbReference>
<dbReference type="InterPro" id="IPR024930">
    <property type="entry name" value="Skp_dom_sf"/>
</dbReference>
<dbReference type="InterPro" id="IPR007144">
    <property type="entry name" value="SSU_processome_Utp11"/>
</dbReference>
<dbReference type="PANTHER" id="PTHR12838">
    <property type="entry name" value="U3 SMALL NUCLEOLAR RNA-ASSOCIATED PROTEIN 11"/>
    <property type="match status" value="1"/>
</dbReference>
<dbReference type="PANTHER" id="PTHR12838:SF0">
    <property type="entry name" value="U3 SMALL NUCLEOLAR RNA-ASSOCIATED PROTEIN 11-RELATED"/>
    <property type="match status" value="1"/>
</dbReference>
<dbReference type="Pfam" id="PF03998">
    <property type="entry name" value="Utp11"/>
    <property type="match status" value="1"/>
</dbReference>
<dbReference type="PIRSF" id="PIRSF015952">
    <property type="entry name" value="U3snoRNP11"/>
    <property type="match status" value="1"/>
</dbReference>
<dbReference type="SUPFAM" id="SSF111384">
    <property type="entry name" value="OmpH-like"/>
    <property type="match status" value="1"/>
</dbReference>
<evidence type="ECO:0000250" key="1">
    <source>
        <dbReference type="UniProtKB" id="P34247"/>
    </source>
</evidence>
<evidence type="ECO:0000305" key="2"/>
<protein>
    <recommendedName>
        <fullName>Probable U3 small nucleolar RNA-associated protein 11</fullName>
        <shortName>U3 snoRNA-associated protein 11</shortName>
    </recommendedName>
</protein>
<reference key="1">
    <citation type="journal article" date="2002" name="Nature">
        <title>Genome sequence of the human malaria parasite Plasmodium falciparum.</title>
        <authorList>
            <person name="Gardner M.J."/>
            <person name="Hall N."/>
            <person name="Fung E."/>
            <person name="White O."/>
            <person name="Berriman M."/>
            <person name="Hyman R.W."/>
            <person name="Carlton J.M."/>
            <person name="Pain A."/>
            <person name="Nelson K.E."/>
            <person name="Bowman S."/>
            <person name="Paulsen I.T."/>
            <person name="James K.D."/>
            <person name="Eisen J.A."/>
            <person name="Rutherford K.M."/>
            <person name="Salzberg S.L."/>
            <person name="Craig A."/>
            <person name="Kyes S."/>
            <person name="Chan M.-S."/>
            <person name="Nene V."/>
            <person name="Shallom S.J."/>
            <person name="Suh B."/>
            <person name="Peterson J."/>
            <person name="Angiuoli S."/>
            <person name="Pertea M."/>
            <person name="Allen J."/>
            <person name="Selengut J."/>
            <person name="Haft D."/>
            <person name="Mather M.W."/>
            <person name="Vaidya A.B."/>
            <person name="Martin D.M.A."/>
            <person name="Fairlamb A.H."/>
            <person name="Fraunholz M.J."/>
            <person name="Roos D.S."/>
            <person name="Ralph S.A."/>
            <person name="McFadden G.I."/>
            <person name="Cummings L.M."/>
            <person name="Subramanian G.M."/>
            <person name="Mungall C."/>
            <person name="Venter J.C."/>
            <person name="Carucci D.J."/>
            <person name="Hoffman S.L."/>
            <person name="Newbold C."/>
            <person name="Davis R.W."/>
            <person name="Fraser C.M."/>
            <person name="Barrell B.G."/>
        </authorList>
    </citation>
    <scope>NUCLEOTIDE SEQUENCE [LARGE SCALE GENOMIC DNA]</scope>
    <source>
        <strain>3D7</strain>
    </source>
</reference>
<proteinExistence type="inferred from homology"/>